<sequence length="751" mass="83419">MAAATERTDELVREYLLFRGFTAALKQLDAEIKADREKGFRVDKIVEQLQQFVQSYDLAALRDYWGYLDRRLFSRLEDMYRPTVNKLKTSLYRYYLVHTVQTGRNDKAQEFFLKQASELQNQAEWKDWFVLPFLPAPDSNPTFATYFSRQWADTFIVSLHNFLSVLFQCMPVPVILNLEAECHRSSLIQEENESLRHKLFALQAESSRMKKEELEVEEAVVHHKLPAYVANMDRLGDSELDMTCSQRSTAHSLQSRGGFLSSLLSQSKKGPARPAQPSGASPTQTGSVLLGKKEPANHQSAKGKEGTASSKDGKSHFSGLVAGESSSLQQRQKRLQEHGKERRELLSKGTSQVQSAEKKADISTSEPEPCSEPQADQAETSTKMPASSTESVGVRQEQPFIVLSQEEYGEHHSSIMYCRVDCSGRRVASLDVDGVIKVWSFNPIMQTKASSISKSPLLSLEWATKRDRLLLLGSGVGTVRLYDTEAKKNLCEISIDEDMPRILSLACSPSGASFVCSAAAQSPISHMDFSVVTSGGKSMNQVPGKLLLWDTKTMKQQLQFSLEPEPIAINCTAFNHNGNLLVTGAADGIVRLFDMQQHECAMSWKAHDGEVYSVEFSYDENTVYSIGEDGKFIQWNIHKSGLKISEYALPSEATGPFVLSGYSGYKQVQFPRGRLFAFDSEGNYMLTCSSTGGVIFKLNGEDKVLESCLSLGGHRAPVVTVDWSTAMDCGTCLTASMDGKIKLTTLLAQKS</sequence>
<proteinExistence type="evidence at transcript level"/>
<protein>
    <recommendedName>
        <fullName evidence="1">WD repeat-containing protein 91</fullName>
    </recommendedName>
</protein>
<comment type="function">
    <text evidence="1">Functions as a negative regulator of the PI3 kinase/PI3K activity associated with endosomal membranes. By modifying the phosphatidylinositol 3-phosphate/PtdInsP3 content of endosomal membranes may regulate endosome fusion, recycling, sorting and early to late endosome transport.</text>
</comment>
<comment type="subcellular location">
    <subcellularLocation>
        <location evidence="1">Early endosome membrane</location>
        <topology evidence="1">Peripheral membrane protein</topology>
    </subcellularLocation>
    <subcellularLocation>
        <location evidence="1">Late endosome membrane</location>
    </subcellularLocation>
</comment>
<comment type="similarity">
    <text evidence="4">Belongs to the WD repeat WDR91 family.</text>
</comment>
<feature type="chain" id="PRO_0000295749" description="WD repeat-containing protein 91">
    <location>
        <begin position="1"/>
        <end position="751"/>
    </location>
</feature>
<feature type="repeat" description="WD 1">
    <location>
        <begin position="410"/>
        <end position="449"/>
    </location>
</feature>
<feature type="repeat" description="WD 2">
    <location>
        <begin position="452"/>
        <end position="492"/>
    </location>
</feature>
<feature type="repeat" description="WD 3">
    <location>
        <begin position="497"/>
        <end position="559"/>
    </location>
</feature>
<feature type="repeat" description="WD 4">
    <location>
        <begin position="564"/>
        <end position="603"/>
    </location>
</feature>
<feature type="repeat" description="WD 5">
    <location>
        <begin position="606"/>
        <end position="645"/>
    </location>
</feature>
<feature type="repeat" description="WD 6">
    <location>
        <begin position="668"/>
        <end position="706"/>
    </location>
</feature>
<feature type="repeat" description="WD 7">
    <location>
        <begin position="713"/>
        <end position="751"/>
    </location>
</feature>
<feature type="region of interest" description="Disordered" evidence="3">
    <location>
        <begin position="264"/>
        <end position="395"/>
    </location>
</feature>
<feature type="coiled-coil region" evidence="2">
    <location>
        <begin position="188"/>
        <end position="212"/>
    </location>
</feature>
<feature type="compositionally biased region" description="Polar residues" evidence="3">
    <location>
        <begin position="278"/>
        <end position="287"/>
    </location>
</feature>
<feature type="compositionally biased region" description="Basic and acidic residues" evidence="3">
    <location>
        <begin position="334"/>
        <end position="346"/>
    </location>
</feature>
<feature type="compositionally biased region" description="Polar residues" evidence="3">
    <location>
        <begin position="377"/>
        <end position="391"/>
    </location>
</feature>
<evidence type="ECO:0000250" key="1">
    <source>
        <dbReference type="UniProtKB" id="A4D1P6"/>
    </source>
</evidence>
<evidence type="ECO:0000255" key="2"/>
<evidence type="ECO:0000256" key="3">
    <source>
        <dbReference type="SAM" id="MobiDB-lite"/>
    </source>
</evidence>
<evidence type="ECO:0000305" key="4"/>
<evidence type="ECO:0000312" key="5">
    <source>
        <dbReference type="EMBL" id="CAG31376.1"/>
    </source>
</evidence>
<gene>
    <name evidence="1" type="primary">WDR91</name>
    <name evidence="5" type="ORF">RCJMB04_5j14</name>
</gene>
<accession>Q5ZLL7</accession>
<dbReference type="EMBL" id="AJ719717">
    <property type="protein sequence ID" value="CAG31376.1"/>
    <property type="molecule type" value="mRNA"/>
</dbReference>
<dbReference type="RefSeq" id="NP_001025923.1">
    <property type="nucleotide sequence ID" value="NM_001030752.1"/>
</dbReference>
<dbReference type="SMR" id="Q5ZLL7"/>
<dbReference type="FunCoup" id="Q5ZLL7">
    <property type="interactions" value="439"/>
</dbReference>
<dbReference type="STRING" id="9031.ENSGALP00000019133"/>
<dbReference type="PaxDb" id="9031-ENSGALP00000019133"/>
<dbReference type="GeneID" id="417939"/>
<dbReference type="KEGG" id="gga:417939"/>
<dbReference type="CTD" id="29062"/>
<dbReference type="VEuPathDB" id="HostDB:geneid_417939"/>
<dbReference type="eggNOG" id="KOG1333">
    <property type="taxonomic scope" value="Eukaryota"/>
</dbReference>
<dbReference type="InParanoid" id="Q5ZLL7"/>
<dbReference type="OrthoDB" id="193023at2759"/>
<dbReference type="PhylomeDB" id="Q5ZLL7"/>
<dbReference type="PRO" id="PR:Q5ZLL7"/>
<dbReference type="Proteomes" id="UP000000539">
    <property type="component" value="Unassembled WGS sequence"/>
</dbReference>
<dbReference type="GO" id="GO:0005829">
    <property type="term" value="C:cytosol"/>
    <property type="evidence" value="ECO:0000250"/>
    <property type="project" value="UniProtKB"/>
</dbReference>
<dbReference type="GO" id="GO:0031901">
    <property type="term" value="C:early endosome membrane"/>
    <property type="evidence" value="ECO:0000250"/>
    <property type="project" value="UniProtKB"/>
</dbReference>
<dbReference type="GO" id="GO:0010008">
    <property type="term" value="C:endosome membrane"/>
    <property type="evidence" value="ECO:0000250"/>
    <property type="project" value="UniProtKB"/>
</dbReference>
<dbReference type="GO" id="GO:0031902">
    <property type="term" value="C:late endosome membrane"/>
    <property type="evidence" value="ECO:0000250"/>
    <property type="project" value="UniProtKB"/>
</dbReference>
<dbReference type="GO" id="GO:0141039">
    <property type="term" value="F:phosphatidylinositol 3-kinase inhibitor activity"/>
    <property type="evidence" value="ECO:0000250"/>
    <property type="project" value="UniProtKB"/>
</dbReference>
<dbReference type="GO" id="GO:0035014">
    <property type="term" value="F:phosphatidylinositol 3-kinase regulator activity"/>
    <property type="evidence" value="ECO:0000318"/>
    <property type="project" value="GO_Central"/>
</dbReference>
<dbReference type="GO" id="GO:0045022">
    <property type="term" value="P:early endosome to late endosome transport"/>
    <property type="evidence" value="ECO:0000250"/>
    <property type="project" value="UniProtKB"/>
</dbReference>
<dbReference type="GO" id="GO:0051898">
    <property type="term" value="P:negative regulation of phosphatidylinositol 3-kinase/protein kinase B signal transduction"/>
    <property type="evidence" value="ECO:0007669"/>
    <property type="project" value="InterPro"/>
</dbReference>
<dbReference type="FunFam" id="2.130.10.10:FF:001344">
    <property type="entry name" value="WD repeat-containing protein 91"/>
    <property type="match status" value="1"/>
</dbReference>
<dbReference type="FunFam" id="2.130.10.10:FF:001788">
    <property type="entry name" value="WD repeat-containing protein 91"/>
    <property type="match status" value="1"/>
</dbReference>
<dbReference type="Gene3D" id="2.130.10.10">
    <property type="entry name" value="YVTN repeat-like/Quinoprotein amine dehydrogenase"/>
    <property type="match status" value="3"/>
</dbReference>
<dbReference type="InterPro" id="IPR024977">
    <property type="entry name" value="Apc4-like_WD40_dom"/>
</dbReference>
<dbReference type="InterPro" id="IPR056327">
    <property type="entry name" value="ARMC9_CTLH-like_dom"/>
</dbReference>
<dbReference type="InterPro" id="IPR015943">
    <property type="entry name" value="WD40/YVTN_repeat-like_dom_sf"/>
</dbReference>
<dbReference type="InterPro" id="IPR036322">
    <property type="entry name" value="WD40_repeat_dom_sf"/>
</dbReference>
<dbReference type="InterPro" id="IPR001680">
    <property type="entry name" value="WD40_rpt"/>
</dbReference>
<dbReference type="InterPro" id="IPR039724">
    <property type="entry name" value="WDR91"/>
</dbReference>
<dbReference type="PANTHER" id="PTHR13083">
    <property type="entry name" value="WD REPEAT-CONTAINING PROTEIN 91"/>
    <property type="match status" value="1"/>
</dbReference>
<dbReference type="PANTHER" id="PTHR13083:SF3">
    <property type="entry name" value="WD REPEAT-CONTAINING PROTEIN 91"/>
    <property type="match status" value="1"/>
</dbReference>
<dbReference type="Pfam" id="PF12894">
    <property type="entry name" value="ANAPC4_WD40"/>
    <property type="match status" value="1"/>
</dbReference>
<dbReference type="Pfam" id="PF23138">
    <property type="entry name" value="CTLH_Armc9"/>
    <property type="match status" value="1"/>
</dbReference>
<dbReference type="SMART" id="SM00320">
    <property type="entry name" value="WD40"/>
    <property type="match status" value="5"/>
</dbReference>
<dbReference type="SUPFAM" id="SSF50978">
    <property type="entry name" value="WD40 repeat-like"/>
    <property type="match status" value="1"/>
</dbReference>
<dbReference type="PROSITE" id="PS50082">
    <property type="entry name" value="WD_REPEATS_2"/>
    <property type="match status" value="2"/>
</dbReference>
<dbReference type="PROSITE" id="PS50294">
    <property type="entry name" value="WD_REPEATS_REGION"/>
    <property type="match status" value="2"/>
</dbReference>
<organism>
    <name type="scientific">Gallus gallus</name>
    <name type="common">Chicken</name>
    <dbReference type="NCBI Taxonomy" id="9031"/>
    <lineage>
        <taxon>Eukaryota</taxon>
        <taxon>Metazoa</taxon>
        <taxon>Chordata</taxon>
        <taxon>Craniata</taxon>
        <taxon>Vertebrata</taxon>
        <taxon>Euteleostomi</taxon>
        <taxon>Archelosauria</taxon>
        <taxon>Archosauria</taxon>
        <taxon>Dinosauria</taxon>
        <taxon>Saurischia</taxon>
        <taxon>Theropoda</taxon>
        <taxon>Coelurosauria</taxon>
        <taxon>Aves</taxon>
        <taxon>Neognathae</taxon>
        <taxon>Galloanserae</taxon>
        <taxon>Galliformes</taxon>
        <taxon>Phasianidae</taxon>
        <taxon>Phasianinae</taxon>
        <taxon>Gallus</taxon>
    </lineage>
</organism>
<reference key="1">
    <citation type="journal article" date="2005" name="Genome Biol.">
        <title>Full-length cDNAs from chicken bursal lymphocytes to facilitate gene function analysis.</title>
        <authorList>
            <person name="Caldwell R.B."/>
            <person name="Kierzek A.M."/>
            <person name="Arakawa H."/>
            <person name="Bezzubov Y."/>
            <person name="Zaim J."/>
            <person name="Fiedler P."/>
            <person name="Kutter S."/>
            <person name="Blagodatski A."/>
            <person name="Kostovska D."/>
            <person name="Koter M."/>
            <person name="Plachy J."/>
            <person name="Carninci P."/>
            <person name="Hayashizaki Y."/>
            <person name="Buerstedde J.-M."/>
        </authorList>
    </citation>
    <scope>NUCLEOTIDE SEQUENCE [LARGE SCALE MRNA]</scope>
    <source>
        <strain>CB</strain>
        <tissue>Bursa of Fabricius</tissue>
    </source>
</reference>
<keyword id="KW-0175">Coiled coil</keyword>
<keyword id="KW-0967">Endosome</keyword>
<keyword id="KW-0472">Membrane</keyword>
<keyword id="KW-1185">Reference proteome</keyword>
<keyword id="KW-0677">Repeat</keyword>
<keyword id="KW-0853">WD repeat</keyword>
<name>WDR91_CHICK</name>